<protein>
    <recommendedName>
        <fullName>Uncharacterized protein YobF</fullName>
    </recommendedName>
</protein>
<reference key="1">
    <citation type="submission" date="1997-10" db="EMBL/GenBank/DDBJ databases">
        <title>Sequence analysis of the Bacillus subtilis chromosome region between the terC and odhAB loci cloned in a yeast artificial chromosome.</title>
        <authorList>
            <person name="Lapidus A."/>
            <person name="Galleron N."/>
            <person name="Sorokin A."/>
            <person name="Ehrlich S.D."/>
        </authorList>
    </citation>
    <scope>NUCLEOTIDE SEQUENCE [GENOMIC DNA]</scope>
</reference>
<reference key="2">
    <citation type="journal article" date="1997" name="Nature">
        <title>The complete genome sequence of the Gram-positive bacterium Bacillus subtilis.</title>
        <authorList>
            <person name="Kunst F."/>
            <person name="Ogasawara N."/>
            <person name="Moszer I."/>
            <person name="Albertini A.M."/>
            <person name="Alloni G."/>
            <person name="Azevedo V."/>
            <person name="Bertero M.G."/>
            <person name="Bessieres P."/>
            <person name="Bolotin A."/>
            <person name="Borchert S."/>
            <person name="Borriss R."/>
            <person name="Boursier L."/>
            <person name="Brans A."/>
            <person name="Braun M."/>
            <person name="Brignell S.C."/>
            <person name="Bron S."/>
            <person name="Brouillet S."/>
            <person name="Bruschi C.V."/>
            <person name="Caldwell B."/>
            <person name="Capuano V."/>
            <person name="Carter N.M."/>
            <person name="Choi S.-K."/>
            <person name="Codani J.-J."/>
            <person name="Connerton I.F."/>
            <person name="Cummings N.J."/>
            <person name="Daniel R.A."/>
            <person name="Denizot F."/>
            <person name="Devine K.M."/>
            <person name="Duesterhoeft A."/>
            <person name="Ehrlich S.D."/>
            <person name="Emmerson P.T."/>
            <person name="Entian K.-D."/>
            <person name="Errington J."/>
            <person name="Fabret C."/>
            <person name="Ferrari E."/>
            <person name="Foulger D."/>
            <person name="Fritz C."/>
            <person name="Fujita M."/>
            <person name="Fujita Y."/>
            <person name="Fuma S."/>
            <person name="Galizzi A."/>
            <person name="Galleron N."/>
            <person name="Ghim S.-Y."/>
            <person name="Glaser P."/>
            <person name="Goffeau A."/>
            <person name="Golightly E.J."/>
            <person name="Grandi G."/>
            <person name="Guiseppi G."/>
            <person name="Guy B.J."/>
            <person name="Haga K."/>
            <person name="Haiech J."/>
            <person name="Harwood C.R."/>
            <person name="Henaut A."/>
            <person name="Hilbert H."/>
            <person name="Holsappel S."/>
            <person name="Hosono S."/>
            <person name="Hullo M.-F."/>
            <person name="Itaya M."/>
            <person name="Jones L.-M."/>
            <person name="Joris B."/>
            <person name="Karamata D."/>
            <person name="Kasahara Y."/>
            <person name="Klaerr-Blanchard M."/>
            <person name="Klein C."/>
            <person name="Kobayashi Y."/>
            <person name="Koetter P."/>
            <person name="Koningstein G."/>
            <person name="Krogh S."/>
            <person name="Kumano M."/>
            <person name="Kurita K."/>
            <person name="Lapidus A."/>
            <person name="Lardinois S."/>
            <person name="Lauber J."/>
            <person name="Lazarevic V."/>
            <person name="Lee S.-M."/>
            <person name="Levine A."/>
            <person name="Liu H."/>
            <person name="Masuda S."/>
            <person name="Mauel C."/>
            <person name="Medigue C."/>
            <person name="Medina N."/>
            <person name="Mellado R.P."/>
            <person name="Mizuno M."/>
            <person name="Moestl D."/>
            <person name="Nakai S."/>
            <person name="Noback M."/>
            <person name="Noone D."/>
            <person name="O'Reilly M."/>
            <person name="Ogawa K."/>
            <person name="Ogiwara A."/>
            <person name="Oudega B."/>
            <person name="Park S.-H."/>
            <person name="Parro V."/>
            <person name="Pohl T.M."/>
            <person name="Portetelle D."/>
            <person name="Porwollik S."/>
            <person name="Prescott A.M."/>
            <person name="Presecan E."/>
            <person name="Pujic P."/>
            <person name="Purnelle B."/>
            <person name="Rapoport G."/>
            <person name="Rey M."/>
            <person name="Reynolds S."/>
            <person name="Rieger M."/>
            <person name="Rivolta C."/>
            <person name="Rocha E."/>
            <person name="Roche B."/>
            <person name="Rose M."/>
            <person name="Sadaie Y."/>
            <person name="Sato T."/>
            <person name="Scanlan E."/>
            <person name="Schleich S."/>
            <person name="Schroeter R."/>
            <person name="Scoffone F."/>
            <person name="Sekiguchi J."/>
            <person name="Sekowska A."/>
            <person name="Seror S.J."/>
            <person name="Serror P."/>
            <person name="Shin B.-S."/>
            <person name="Soldo B."/>
            <person name="Sorokin A."/>
            <person name="Tacconi E."/>
            <person name="Takagi T."/>
            <person name="Takahashi H."/>
            <person name="Takemaru K."/>
            <person name="Takeuchi M."/>
            <person name="Tamakoshi A."/>
            <person name="Tanaka T."/>
            <person name="Terpstra P."/>
            <person name="Tognoni A."/>
            <person name="Tosato V."/>
            <person name="Uchiyama S."/>
            <person name="Vandenbol M."/>
            <person name="Vannier F."/>
            <person name="Vassarotti A."/>
            <person name="Viari A."/>
            <person name="Wambutt R."/>
            <person name="Wedler E."/>
            <person name="Wedler H."/>
            <person name="Weitzenegger T."/>
            <person name="Winters P."/>
            <person name="Wipat A."/>
            <person name="Yamamoto H."/>
            <person name="Yamane K."/>
            <person name="Yasumoto K."/>
            <person name="Yata K."/>
            <person name="Yoshida K."/>
            <person name="Yoshikawa H.-F."/>
            <person name="Zumstein E."/>
            <person name="Yoshikawa H."/>
            <person name="Danchin A."/>
        </authorList>
    </citation>
    <scope>NUCLEOTIDE SEQUENCE [LARGE SCALE GENOMIC DNA]</scope>
    <source>
        <strain>168</strain>
    </source>
</reference>
<gene>
    <name type="primary">yobF</name>
    <name type="ordered locus">BSU18890</name>
</gene>
<keyword id="KW-1185">Reference proteome</keyword>
<name>YOBF_BACSU</name>
<feature type="chain" id="PRO_0000378468" description="Uncharacterized protein YobF">
    <location>
        <begin position="1"/>
        <end position="307"/>
    </location>
</feature>
<sequence>MLVYIGNGHYCYSNSTAMFLSSIGENVSPQLVEILTGVGLGAMIEYEKNLYFSMRDPDDGINYALNILGFTAEEHQQASDLDDPFPLLKQQIKQNPVILGPLDMGELTYHPNHKNLNGSDHYVLGYQMDNENIYVQDPAGFPFVPLSLDQFKKAWMAERIPYRKGINKYWSTAKKVVTLDNNEIYERAIDYFKRTYRKFEKVDIGLIGREAICFYADQLLNAPITADTIRHTTFFLFQLSARRANDYAMYFKDRHSHLSVLKTEQAKVFGICHSMSVNKDWKGISEKLMKLADLEDNFRLELLKVGY</sequence>
<accession>O34780</accession>
<accession>Q796E5</accession>
<proteinExistence type="predicted"/>
<dbReference type="EMBL" id="AF027868">
    <property type="protein sequence ID" value="AAB84459.1"/>
    <property type="molecule type" value="Genomic_DNA"/>
</dbReference>
<dbReference type="EMBL" id="AL009126">
    <property type="protein sequence ID" value="CAB13781.1"/>
    <property type="molecule type" value="Genomic_DNA"/>
</dbReference>
<dbReference type="PIR" id="F69898">
    <property type="entry name" value="F69898"/>
</dbReference>
<dbReference type="RefSeq" id="NP_389770.1">
    <property type="nucleotide sequence ID" value="NC_000964.3"/>
</dbReference>
<dbReference type="RefSeq" id="WP_003231350.1">
    <property type="nucleotide sequence ID" value="NZ_OZ025638.1"/>
</dbReference>
<dbReference type="SMR" id="O34780"/>
<dbReference type="FunCoup" id="O34780">
    <property type="interactions" value="33"/>
</dbReference>
<dbReference type="STRING" id="224308.BSU18890"/>
<dbReference type="PaxDb" id="224308-BSU18890"/>
<dbReference type="DNASU" id="939609"/>
<dbReference type="EnsemblBacteria" id="CAB13781">
    <property type="protein sequence ID" value="CAB13781"/>
    <property type="gene ID" value="BSU_18890"/>
</dbReference>
<dbReference type="GeneID" id="939609"/>
<dbReference type="KEGG" id="bsu:BSU18890"/>
<dbReference type="PATRIC" id="fig|224308.179.peg.2061"/>
<dbReference type="eggNOG" id="ENOG502Z8YF">
    <property type="taxonomic scope" value="Bacteria"/>
</dbReference>
<dbReference type="InParanoid" id="O34780"/>
<dbReference type="OrthoDB" id="8065844at2"/>
<dbReference type="BioCyc" id="BSUB:BSU18890-MONOMER"/>
<dbReference type="Proteomes" id="UP000001570">
    <property type="component" value="Chromosome"/>
</dbReference>
<dbReference type="Gene3D" id="3.90.70.10">
    <property type="entry name" value="Cysteine proteinases"/>
    <property type="match status" value="1"/>
</dbReference>
<organism>
    <name type="scientific">Bacillus subtilis (strain 168)</name>
    <dbReference type="NCBI Taxonomy" id="224308"/>
    <lineage>
        <taxon>Bacteria</taxon>
        <taxon>Bacillati</taxon>
        <taxon>Bacillota</taxon>
        <taxon>Bacilli</taxon>
        <taxon>Bacillales</taxon>
        <taxon>Bacillaceae</taxon>
        <taxon>Bacillus</taxon>
    </lineage>
</organism>